<evidence type="ECO:0000255" key="1">
    <source>
        <dbReference type="HAMAP-Rule" id="MF_01008"/>
    </source>
</evidence>
<evidence type="ECO:0000255" key="2">
    <source>
        <dbReference type="PROSITE-ProRule" id="PRU01076"/>
    </source>
</evidence>
<keyword id="KW-0963">Cytoplasm</keyword>
<keyword id="KW-0238">DNA-binding</keyword>
<keyword id="KW-1185">Reference proteome</keyword>
<keyword id="KW-0677">Repeat</keyword>
<keyword id="KW-0804">Transcription</keyword>
<keyword id="KW-0805">Transcription regulation</keyword>
<reference key="1">
    <citation type="journal article" date="2003" name="Science">
        <title>A genomic view of the human-Bacteroides thetaiotaomicron symbiosis.</title>
        <authorList>
            <person name="Xu J."/>
            <person name="Bjursell M.K."/>
            <person name="Himrod J."/>
            <person name="Deng S."/>
            <person name="Carmichael L.K."/>
            <person name="Chiang H.C."/>
            <person name="Hooper L.V."/>
            <person name="Gordon J.I."/>
        </authorList>
    </citation>
    <scope>NUCLEOTIDE SEQUENCE [LARGE SCALE GENOMIC DNA]</scope>
    <source>
        <strain>ATCC 29148 / DSM 2079 / JCM 5827 / CCUG 10774 / NCTC 10582 / VPI-5482 / E50</strain>
    </source>
</reference>
<name>MRAZ_BACTN</name>
<organism>
    <name type="scientific">Bacteroides thetaiotaomicron (strain ATCC 29148 / DSM 2079 / JCM 5827 / CCUG 10774 / NCTC 10582 / VPI-5482 / E50)</name>
    <dbReference type="NCBI Taxonomy" id="226186"/>
    <lineage>
        <taxon>Bacteria</taxon>
        <taxon>Pseudomonadati</taxon>
        <taxon>Bacteroidota</taxon>
        <taxon>Bacteroidia</taxon>
        <taxon>Bacteroidales</taxon>
        <taxon>Bacteroidaceae</taxon>
        <taxon>Bacteroides</taxon>
    </lineage>
</organism>
<comment type="subunit">
    <text evidence="1">Forms oligomers.</text>
</comment>
<comment type="subcellular location">
    <subcellularLocation>
        <location evidence="1">Cytoplasm</location>
        <location evidence="1">Nucleoid</location>
    </subcellularLocation>
</comment>
<comment type="similarity">
    <text evidence="1">Belongs to the MraZ family.</text>
</comment>
<protein>
    <recommendedName>
        <fullName>Transcriptional regulator MraZ</fullName>
    </recommendedName>
</protein>
<sequence length="156" mass="18400">MIRFLGNIEVRADAKGRVFIPATFRKQLQAASEERLIMRKDVFQDCLTLYPESVWNEELNELRSRLNKWNSKHQLIFRQFVSDVEVVTPDSNGRILIPKRYLQICNIRGDIRFIGIDNKIEIWAKERAEQPFMSPEEFGAALEEIMNDENRQDGER</sequence>
<gene>
    <name evidence="1" type="primary">mraZ</name>
    <name type="ordered locus">BT_3456</name>
</gene>
<dbReference type="EMBL" id="AE015928">
    <property type="protein sequence ID" value="AAO78562.1"/>
    <property type="molecule type" value="Genomic_DNA"/>
</dbReference>
<dbReference type="RefSeq" id="NP_812368.1">
    <property type="nucleotide sequence ID" value="NC_004663.1"/>
</dbReference>
<dbReference type="RefSeq" id="WP_008763721.1">
    <property type="nucleotide sequence ID" value="NZ_UYXG01000003.1"/>
</dbReference>
<dbReference type="SMR" id="Q8A250"/>
<dbReference type="FunCoup" id="Q8A250">
    <property type="interactions" value="193"/>
</dbReference>
<dbReference type="STRING" id="226186.BT_3456"/>
<dbReference type="PaxDb" id="226186-BT_3456"/>
<dbReference type="EnsemblBacteria" id="AAO78562">
    <property type="protein sequence ID" value="AAO78562"/>
    <property type="gene ID" value="BT_3456"/>
</dbReference>
<dbReference type="GeneID" id="60924637"/>
<dbReference type="KEGG" id="bth:BT_3456"/>
<dbReference type="PATRIC" id="fig|226186.12.peg.3523"/>
<dbReference type="eggNOG" id="COG2001">
    <property type="taxonomic scope" value="Bacteria"/>
</dbReference>
<dbReference type="HOGENOM" id="CLU_107907_0_1_10"/>
<dbReference type="InParanoid" id="Q8A250"/>
<dbReference type="OrthoDB" id="9807753at2"/>
<dbReference type="Proteomes" id="UP000001414">
    <property type="component" value="Chromosome"/>
</dbReference>
<dbReference type="GO" id="GO:0005737">
    <property type="term" value="C:cytoplasm"/>
    <property type="evidence" value="ECO:0007669"/>
    <property type="project" value="UniProtKB-UniRule"/>
</dbReference>
<dbReference type="GO" id="GO:0009295">
    <property type="term" value="C:nucleoid"/>
    <property type="evidence" value="ECO:0007669"/>
    <property type="project" value="UniProtKB-SubCell"/>
</dbReference>
<dbReference type="GO" id="GO:0003700">
    <property type="term" value="F:DNA-binding transcription factor activity"/>
    <property type="evidence" value="ECO:0000318"/>
    <property type="project" value="GO_Central"/>
</dbReference>
<dbReference type="GO" id="GO:0000976">
    <property type="term" value="F:transcription cis-regulatory region binding"/>
    <property type="evidence" value="ECO:0000318"/>
    <property type="project" value="GO_Central"/>
</dbReference>
<dbReference type="GO" id="GO:2000143">
    <property type="term" value="P:negative regulation of DNA-templated transcription initiation"/>
    <property type="evidence" value="ECO:0000318"/>
    <property type="project" value="GO_Central"/>
</dbReference>
<dbReference type="CDD" id="cd16321">
    <property type="entry name" value="MraZ_C"/>
    <property type="match status" value="1"/>
</dbReference>
<dbReference type="CDD" id="cd16320">
    <property type="entry name" value="MraZ_N"/>
    <property type="match status" value="1"/>
</dbReference>
<dbReference type="FunFam" id="3.40.1550.20:FF:000005">
    <property type="entry name" value="Transcriptional regulator MraZ"/>
    <property type="match status" value="1"/>
</dbReference>
<dbReference type="Gene3D" id="3.40.1550.20">
    <property type="entry name" value="Transcriptional regulator MraZ domain"/>
    <property type="match status" value="1"/>
</dbReference>
<dbReference type="HAMAP" id="MF_01008">
    <property type="entry name" value="MraZ"/>
    <property type="match status" value="1"/>
</dbReference>
<dbReference type="InterPro" id="IPR003444">
    <property type="entry name" value="MraZ"/>
</dbReference>
<dbReference type="InterPro" id="IPR035644">
    <property type="entry name" value="MraZ_C"/>
</dbReference>
<dbReference type="InterPro" id="IPR020603">
    <property type="entry name" value="MraZ_dom"/>
</dbReference>
<dbReference type="InterPro" id="IPR035642">
    <property type="entry name" value="MraZ_N"/>
</dbReference>
<dbReference type="InterPro" id="IPR038619">
    <property type="entry name" value="MraZ_sf"/>
</dbReference>
<dbReference type="InterPro" id="IPR007159">
    <property type="entry name" value="SpoVT-AbrB_dom"/>
</dbReference>
<dbReference type="InterPro" id="IPR037914">
    <property type="entry name" value="SpoVT-AbrB_sf"/>
</dbReference>
<dbReference type="NCBIfam" id="NF001483">
    <property type="entry name" value="PRK00326.3-5"/>
    <property type="match status" value="1"/>
</dbReference>
<dbReference type="PANTHER" id="PTHR34701">
    <property type="entry name" value="TRANSCRIPTIONAL REGULATOR MRAZ"/>
    <property type="match status" value="1"/>
</dbReference>
<dbReference type="PANTHER" id="PTHR34701:SF1">
    <property type="entry name" value="TRANSCRIPTIONAL REGULATOR MRAZ"/>
    <property type="match status" value="1"/>
</dbReference>
<dbReference type="Pfam" id="PF02381">
    <property type="entry name" value="MraZ"/>
    <property type="match status" value="2"/>
</dbReference>
<dbReference type="SUPFAM" id="SSF89447">
    <property type="entry name" value="AbrB/MazE/MraZ-like"/>
    <property type="match status" value="1"/>
</dbReference>
<dbReference type="PROSITE" id="PS51740">
    <property type="entry name" value="SPOVT_ABRB"/>
    <property type="match status" value="2"/>
</dbReference>
<proteinExistence type="inferred from homology"/>
<feature type="chain" id="PRO_0000108460" description="Transcriptional regulator MraZ">
    <location>
        <begin position="1"/>
        <end position="156"/>
    </location>
</feature>
<feature type="domain" description="SpoVT-AbrB 1" evidence="2">
    <location>
        <begin position="7"/>
        <end position="54"/>
    </location>
</feature>
<feature type="domain" description="SpoVT-AbrB 2" evidence="2">
    <location>
        <begin position="84"/>
        <end position="127"/>
    </location>
</feature>
<accession>Q8A250</accession>